<accession>A1WVC1</accession>
<reference key="1">
    <citation type="submission" date="2006-12" db="EMBL/GenBank/DDBJ databases">
        <title>Complete sequence of Halorhodospira halophila SL1.</title>
        <authorList>
            <consortium name="US DOE Joint Genome Institute"/>
            <person name="Copeland A."/>
            <person name="Lucas S."/>
            <person name="Lapidus A."/>
            <person name="Barry K."/>
            <person name="Detter J.C."/>
            <person name="Glavina del Rio T."/>
            <person name="Hammon N."/>
            <person name="Israni S."/>
            <person name="Dalin E."/>
            <person name="Tice H."/>
            <person name="Pitluck S."/>
            <person name="Saunders E."/>
            <person name="Brettin T."/>
            <person name="Bruce D."/>
            <person name="Han C."/>
            <person name="Tapia R."/>
            <person name="Schmutz J."/>
            <person name="Larimer F."/>
            <person name="Land M."/>
            <person name="Hauser L."/>
            <person name="Kyrpides N."/>
            <person name="Mikhailova N."/>
            <person name="Hoff W."/>
            <person name="Richardson P."/>
        </authorList>
    </citation>
    <scope>NUCLEOTIDE SEQUENCE [LARGE SCALE GENOMIC DNA]</scope>
    <source>
        <strain>DSM 244 / SL1</strain>
    </source>
</reference>
<feature type="chain" id="PRO_1000052412" description="Large ribosomal subunit protein uL4">
    <location>
        <begin position="1"/>
        <end position="205"/>
    </location>
</feature>
<feature type="region of interest" description="Disordered" evidence="2">
    <location>
        <begin position="43"/>
        <end position="78"/>
    </location>
</feature>
<comment type="function">
    <text evidence="1">One of the primary rRNA binding proteins, this protein initially binds near the 5'-end of the 23S rRNA. It is important during the early stages of 50S assembly. It makes multiple contacts with different domains of the 23S rRNA in the assembled 50S subunit and ribosome.</text>
</comment>
<comment type="function">
    <text evidence="1">Forms part of the polypeptide exit tunnel.</text>
</comment>
<comment type="subunit">
    <text evidence="1">Part of the 50S ribosomal subunit.</text>
</comment>
<comment type="similarity">
    <text evidence="1">Belongs to the universal ribosomal protein uL4 family.</text>
</comment>
<name>RL4_HALHL</name>
<sequence>MELKLSNEKGEAAGQLEVSDQAFDAPFRESLVHQVVTAHLAGARAGTKAQKTRSEVAGGGKKPWRQKGTGNARAGTIRSPLWRGGGQTFAAKPRDFSQKVNRKMYRGALRSILSELARQDRLVVVKQLTVDAPKTRELKARLEGLGVREGLIVVDEIDANLELAARNLPRLGVVDAAGVDPASLVGAERVVITESAIRRVEEWLS</sequence>
<dbReference type="EMBL" id="CP000544">
    <property type="protein sequence ID" value="ABM61633.1"/>
    <property type="molecule type" value="Genomic_DNA"/>
</dbReference>
<dbReference type="RefSeq" id="WP_011813656.1">
    <property type="nucleotide sequence ID" value="NC_008789.1"/>
</dbReference>
<dbReference type="SMR" id="A1WVC1"/>
<dbReference type="STRING" id="349124.Hhal_0857"/>
<dbReference type="KEGG" id="hha:Hhal_0857"/>
<dbReference type="eggNOG" id="COG0088">
    <property type="taxonomic scope" value="Bacteria"/>
</dbReference>
<dbReference type="HOGENOM" id="CLU_041575_5_2_6"/>
<dbReference type="OrthoDB" id="9803201at2"/>
<dbReference type="Proteomes" id="UP000000647">
    <property type="component" value="Chromosome"/>
</dbReference>
<dbReference type="GO" id="GO:1990904">
    <property type="term" value="C:ribonucleoprotein complex"/>
    <property type="evidence" value="ECO:0007669"/>
    <property type="project" value="UniProtKB-KW"/>
</dbReference>
<dbReference type="GO" id="GO:0005840">
    <property type="term" value="C:ribosome"/>
    <property type="evidence" value="ECO:0007669"/>
    <property type="project" value="UniProtKB-KW"/>
</dbReference>
<dbReference type="GO" id="GO:0019843">
    <property type="term" value="F:rRNA binding"/>
    <property type="evidence" value="ECO:0007669"/>
    <property type="project" value="UniProtKB-UniRule"/>
</dbReference>
<dbReference type="GO" id="GO:0003735">
    <property type="term" value="F:structural constituent of ribosome"/>
    <property type="evidence" value="ECO:0007669"/>
    <property type="project" value="InterPro"/>
</dbReference>
<dbReference type="GO" id="GO:0006412">
    <property type="term" value="P:translation"/>
    <property type="evidence" value="ECO:0007669"/>
    <property type="project" value="UniProtKB-UniRule"/>
</dbReference>
<dbReference type="Gene3D" id="3.40.1370.10">
    <property type="match status" value="1"/>
</dbReference>
<dbReference type="HAMAP" id="MF_01328_B">
    <property type="entry name" value="Ribosomal_uL4_B"/>
    <property type="match status" value="1"/>
</dbReference>
<dbReference type="InterPro" id="IPR002136">
    <property type="entry name" value="Ribosomal_uL4"/>
</dbReference>
<dbReference type="InterPro" id="IPR013005">
    <property type="entry name" value="Ribosomal_uL4-like"/>
</dbReference>
<dbReference type="InterPro" id="IPR023574">
    <property type="entry name" value="Ribosomal_uL4_dom_sf"/>
</dbReference>
<dbReference type="NCBIfam" id="TIGR03953">
    <property type="entry name" value="rplD_bact"/>
    <property type="match status" value="1"/>
</dbReference>
<dbReference type="PANTHER" id="PTHR10746">
    <property type="entry name" value="50S RIBOSOMAL PROTEIN L4"/>
    <property type="match status" value="1"/>
</dbReference>
<dbReference type="PANTHER" id="PTHR10746:SF6">
    <property type="entry name" value="LARGE RIBOSOMAL SUBUNIT PROTEIN UL4M"/>
    <property type="match status" value="1"/>
</dbReference>
<dbReference type="Pfam" id="PF00573">
    <property type="entry name" value="Ribosomal_L4"/>
    <property type="match status" value="1"/>
</dbReference>
<dbReference type="SUPFAM" id="SSF52166">
    <property type="entry name" value="Ribosomal protein L4"/>
    <property type="match status" value="1"/>
</dbReference>
<proteinExistence type="inferred from homology"/>
<organism>
    <name type="scientific">Halorhodospira halophila (strain DSM 244 / SL1)</name>
    <name type="common">Ectothiorhodospira halophila (strain DSM 244 / SL1)</name>
    <dbReference type="NCBI Taxonomy" id="349124"/>
    <lineage>
        <taxon>Bacteria</taxon>
        <taxon>Pseudomonadati</taxon>
        <taxon>Pseudomonadota</taxon>
        <taxon>Gammaproteobacteria</taxon>
        <taxon>Chromatiales</taxon>
        <taxon>Ectothiorhodospiraceae</taxon>
        <taxon>Halorhodospira</taxon>
    </lineage>
</organism>
<evidence type="ECO:0000255" key="1">
    <source>
        <dbReference type="HAMAP-Rule" id="MF_01328"/>
    </source>
</evidence>
<evidence type="ECO:0000256" key="2">
    <source>
        <dbReference type="SAM" id="MobiDB-lite"/>
    </source>
</evidence>
<evidence type="ECO:0000305" key="3"/>
<protein>
    <recommendedName>
        <fullName evidence="1">Large ribosomal subunit protein uL4</fullName>
    </recommendedName>
    <alternativeName>
        <fullName evidence="3">50S ribosomal protein L4</fullName>
    </alternativeName>
</protein>
<gene>
    <name evidence="1" type="primary">rplD</name>
    <name type="ordered locus">Hhal_0857</name>
</gene>
<keyword id="KW-1185">Reference proteome</keyword>
<keyword id="KW-0687">Ribonucleoprotein</keyword>
<keyword id="KW-0689">Ribosomal protein</keyword>
<keyword id="KW-0694">RNA-binding</keyword>
<keyword id="KW-0699">rRNA-binding</keyword>